<evidence type="ECO:0000250" key="1">
    <source>
        <dbReference type="UniProtKB" id="P68137"/>
    </source>
</evidence>
<evidence type="ECO:0000305" key="2"/>
<name>ACT4_LYTPI</name>
<feature type="chain" id="PRO_0000088960" description="Actin, cytoskeletal 4">
    <location>
        <begin position="1" status="less than"/>
        <end position="154" status="greater than"/>
    </location>
</feature>
<feature type="non-terminal residue">
    <location>
        <position position="1"/>
    </location>
</feature>
<feature type="non-terminal residue">
    <location>
        <position position="154"/>
    </location>
</feature>
<protein>
    <recommendedName>
        <fullName>Actin, cytoskeletal 4</fullName>
        <ecNumber evidence="1">3.6.4.-</ecNumber>
    </recommendedName>
    <alternativeName>
        <fullName>LPC4</fullName>
    </alternativeName>
</protein>
<sequence length="154" mass="17149">EKLCYVALDFEQEMQTAASSSSLEKSYELPDGQVITTGNERFRAPESLYQPSFLGMESSGIHETTYNSIMMCDVDIRKDLYANTVLSGGSTIFPGIADRMQKEITSLAPPTMKIKIIAPPERKYSVWIGGSILASLSTFQQMWISKQEYDESGP</sequence>
<reference key="1">
    <citation type="journal article" date="1994" name="J. Mol. Evol.">
        <title>Evolution of actin gene families of sea urchins.</title>
        <authorList>
            <person name="Fang H."/>
            <person name="Brandhorst B.P."/>
        </authorList>
    </citation>
    <scope>NUCLEOTIDE SEQUENCE [GENOMIC DNA]</scope>
</reference>
<accession>Q25380</accession>
<keyword id="KW-0067">ATP-binding</keyword>
<keyword id="KW-0963">Cytoplasm</keyword>
<keyword id="KW-0206">Cytoskeleton</keyword>
<keyword id="KW-0378">Hydrolase</keyword>
<keyword id="KW-0547">Nucleotide-binding</keyword>
<proteinExistence type="inferred from homology"/>
<comment type="function">
    <text>Actins are highly conserved proteins that are involved in various types of cell motility and are ubiquitously expressed in all eukaryotic cells.</text>
</comment>
<comment type="catalytic activity">
    <reaction evidence="1">
        <text>ATP + H2O = ADP + phosphate + H(+)</text>
        <dbReference type="Rhea" id="RHEA:13065"/>
        <dbReference type="ChEBI" id="CHEBI:15377"/>
        <dbReference type="ChEBI" id="CHEBI:15378"/>
        <dbReference type="ChEBI" id="CHEBI:30616"/>
        <dbReference type="ChEBI" id="CHEBI:43474"/>
        <dbReference type="ChEBI" id="CHEBI:456216"/>
    </reaction>
</comment>
<comment type="subcellular location">
    <subcellularLocation>
        <location>Cytoplasm</location>
    </subcellularLocation>
    <subcellularLocation>
        <location>Cytoplasm</location>
        <location>Cytoskeleton</location>
    </subcellularLocation>
</comment>
<comment type="similarity">
    <text evidence="2">Belongs to the actin family.</text>
</comment>
<dbReference type="EC" id="3.6.4.-" evidence="1"/>
<dbReference type="EMBL" id="U09654">
    <property type="protein sequence ID" value="AAA53366.1"/>
    <property type="molecule type" value="Genomic_DNA"/>
</dbReference>
<dbReference type="SMR" id="Q25380"/>
<dbReference type="OrthoDB" id="10249208at2759"/>
<dbReference type="GO" id="GO:0005737">
    <property type="term" value="C:cytoplasm"/>
    <property type="evidence" value="ECO:0007669"/>
    <property type="project" value="UniProtKB-SubCell"/>
</dbReference>
<dbReference type="GO" id="GO:0005856">
    <property type="term" value="C:cytoskeleton"/>
    <property type="evidence" value="ECO:0007669"/>
    <property type="project" value="UniProtKB-SubCell"/>
</dbReference>
<dbReference type="GO" id="GO:0005524">
    <property type="term" value="F:ATP binding"/>
    <property type="evidence" value="ECO:0007669"/>
    <property type="project" value="UniProtKB-KW"/>
</dbReference>
<dbReference type="GO" id="GO:0016787">
    <property type="term" value="F:hydrolase activity"/>
    <property type="evidence" value="ECO:0007669"/>
    <property type="project" value="UniProtKB-KW"/>
</dbReference>
<dbReference type="FunFam" id="3.30.420.40:FF:000131">
    <property type="entry name" value="Actin, alpha skeletal muscle"/>
    <property type="match status" value="1"/>
</dbReference>
<dbReference type="FunFam" id="3.90.640.10:FF:000047">
    <property type="entry name" value="Actin, alpha skeletal muscle"/>
    <property type="match status" value="1"/>
</dbReference>
<dbReference type="FunFam" id="3.30.420.40:FF:000058">
    <property type="entry name" value="Putative actin-related protein 5"/>
    <property type="match status" value="1"/>
</dbReference>
<dbReference type="Gene3D" id="3.30.420.40">
    <property type="match status" value="2"/>
</dbReference>
<dbReference type="Gene3D" id="3.90.640.10">
    <property type="entry name" value="Actin, Chain A, domain 4"/>
    <property type="match status" value="1"/>
</dbReference>
<dbReference type="InterPro" id="IPR004000">
    <property type="entry name" value="Actin"/>
</dbReference>
<dbReference type="InterPro" id="IPR004001">
    <property type="entry name" value="Actin_CS"/>
</dbReference>
<dbReference type="InterPro" id="IPR043129">
    <property type="entry name" value="ATPase_NBD"/>
</dbReference>
<dbReference type="PANTHER" id="PTHR11937">
    <property type="entry name" value="ACTIN"/>
    <property type="match status" value="1"/>
</dbReference>
<dbReference type="Pfam" id="PF00022">
    <property type="entry name" value="Actin"/>
    <property type="match status" value="1"/>
</dbReference>
<dbReference type="SMART" id="SM00268">
    <property type="entry name" value="ACTIN"/>
    <property type="match status" value="1"/>
</dbReference>
<dbReference type="SUPFAM" id="SSF53067">
    <property type="entry name" value="Actin-like ATPase domain"/>
    <property type="match status" value="1"/>
</dbReference>
<dbReference type="PROSITE" id="PS00432">
    <property type="entry name" value="ACTINS_2"/>
    <property type="match status" value="1"/>
</dbReference>
<organism>
    <name type="scientific">Lytechinus pictus</name>
    <name type="common">Painted sea urchin</name>
    <dbReference type="NCBI Taxonomy" id="7653"/>
    <lineage>
        <taxon>Eukaryota</taxon>
        <taxon>Metazoa</taxon>
        <taxon>Echinodermata</taxon>
        <taxon>Eleutherozoa</taxon>
        <taxon>Echinozoa</taxon>
        <taxon>Echinoidea</taxon>
        <taxon>Euechinoidea</taxon>
        <taxon>Echinacea</taxon>
        <taxon>Temnopleuroida</taxon>
        <taxon>Toxopneustidae</taxon>
        <taxon>Lytechinus</taxon>
    </lineage>
</organism>